<organism>
    <name type="scientific">Cricetulus griseus</name>
    <name type="common">Chinese hamster</name>
    <name type="synonym">Cricetulus barabensis griseus</name>
    <dbReference type="NCBI Taxonomy" id="10029"/>
    <lineage>
        <taxon>Eukaryota</taxon>
        <taxon>Metazoa</taxon>
        <taxon>Chordata</taxon>
        <taxon>Craniata</taxon>
        <taxon>Vertebrata</taxon>
        <taxon>Euteleostomi</taxon>
        <taxon>Mammalia</taxon>
        <taxon>Eutheria</taxon>
        <taxon>Euarchontoglires</taxon>
        <taxon>Glires</taxon>
        <taxon>Rodentia</taxon>
        <taxon>Myomorpha</taxon>
        <taxon>Muroidea</taxon>
        <taxon>Cricetidae</taxon>
        <taxon>Cricetinae</taxon>
        <taxon>Cricetulus</taxon>
    </lineage>
</organism>
<sequence>MKFPMVAAALLLLCAVRAEEEDKKEDVGTVVGIDLGTTYSCVGVFKNGRVEIIANDQGNRITPSYVAFTPEGERLIGDAAKNQLTSNPENTVFDAKRLIGRTWNDPSVQQDIKFLPFKVVEKKTKPYIQVDIGGGQTKTFAPEEISAMVLTKMKETAEAYLGKKVTHAVVTVPAYFNDAQRQATKDAGTIAGLNVMRIINEPTAAAIAYGLDKREGEKNILVFDLGGGTFDVSLLTIDNGVFEVVATNGDTHLGGEDFDQRVMEHFIKLYKKKTGKDVRKDNRAVQKLRREVEKAKRALSSQHQARIEIESFFEGEDFSETLTRAKFEELNMDLFRSTMKPVQKVLEDSDLKKSDIDEIVLVGGSTRIPKIQQLVKEFFNGKEPSRGINPDEAVAYGAAVQAGVLSGDQDTGDLVLLDVCPLTLGIETVGGVMTKLIPRNTVVPTKKSQIFSTASDNQPTVTIKVYEGERPLTKDNHLLGTFDLTGIPPAPRGVPQIEVTFEIDVNGILRVTAEDKGTGNKNKITITNDQNRLTPEEIERMVNDAEKFAEEDKKLKERIDTRNELESYAYSLKNQIGDKEKLGGKLSSEDKETMEKAVEEKIEWLESHQDADIEDFKAKKKELEEIVQPIISKLYGSAGPPPTGEEDTSEKDEL</sequence>
<accession>G3I8R9</accession>
<feature type="signal peptide" evidence="3">
    <location>
        <begin position="1"/>
        <end position="18"/>
    </location>
</feature>
<feature type="chain" id="PRO_5003445004" description="Endoplasmic reticulum chaperone BiP">
    <location>
        <begin position="19"/>
        <end position="654"/>
    </location>
</feature>
<feature type="region of interest" description="Required for interaction with ELAPOR1" evidence="3">
    <location>
        <begin position="1"/>
        <end position="80"/>
    </location>
</feature>
<feature type="region of interest" description="Nucleotide-binding (NBD)" evidence="3">
    <location>
        <begin position="125"/>
        <end position="280"/>
    </location>
</feature>
<feature type="region of interest" description="Interdomain linker" evidence="7">
    <location>
        <begin position="409"/>
        <end position="419"/>
    </location>
</feature>
<feature type="region of interest" description="Substrate-binding (SBD)" evidence="3">
    <location>
        <begin position="420"/>
        <end position="500"/>
    </location>
</feature>
<feature type="region of interest" description="Disordered" evidence="6">
    <location>
        <begin position="632"/>
        <end position="654"/>
    </location>
</feature>
<feature type="short sequence motif" description="Prevents secretion from ER" evidence="5">
    <location>
        <begin position="651"/>
        <end position="654"/>
    </location>
</feature>
<feature type="compositionally biased region" description="Acidic residues" evidence="6">
    <location>
        <begin position="644"/>
        <end position="654"/>
    </location>
</feature>
<feature type="binding site" evidence="10 18 19">
    <location>
        <begin position="36"/>
        <end position="39"/>
    </location>
    <ligand>
        <name>ATP</name>
        <dbReference type="ChEBI" id="CHEBI:30616"/>
    </ligand>
</feature>
<feature type="binding site" evidence="3">
    <location>
        <position position="96"/>
    </location>
    <ligand>
        <name>ATP</name>
        <dbReference type="ChEBI" id="CHEBI:30616"/>
    </ligand>
</feature>
<feature type="binding site" evidence="10 18 19">
    <location>
        <begin position="227"/>
        <end position="229"/>
    </location>
    <ligand>
        <name>ATP</name>
        <dbReference type="ChEBI" id="CHEBI:30616"/>
    </ligand>
</feature>
<feature type="binding site" evidence="10 18 19">
    <location>
        <begin position="293"/>
        <end position="300"/>
    </location>
    <ligand>
        <name>ATP</name>
        <dbReference type="ChEBI" id="CHEBI:30616"/>
    </ligand>
</feature>
<feature type="binding site" evidence="10 18 19">
    <location>
        <begin position="364"/>
        <end position="367"/>
    </location>
    <ligand>
        <name>ATP</name>
        <dbReference type="ChEBI" id="CHEBI:30616"/>
    </ligand>
</feature>
<feature type="modified residue" description="Phosphoserine" evidence="1">
    <location>
        <position position="86"/>
    </location>
</feature>
<feature type="modified residue" description="N6-acetyllysine" evidence="4">
    <location>
        <position position="125"/>
    </location>
</feature>
<feature type="modified residue" description="3'-nitrotyrosine" evidence="4">
    <location>
        <position position="160"/>
    </location>
</feature>
<feature type="modified residue" description="N6-acetyllysine" evidence="4">
    <location>
        <position position="213"/>
    </location>
</feature>
<feature type="modified residue" description="N6-acetyllysine" evidence="2">
    <location>
        <position position="271"/>
    </location>
</feature>
<feature type="modified residue" description="N6-acetyllysine" evidence="4">
    <location>
        <position position="326"/>
    </location>
</feature>
<feature type="modified residue" description="N6-acetyllysine; alternate" evidence="4">
    <location>
        <position position="353"/>
    </location>
</feature>
<feature type="modified residue" description="N6-succinyllysine" evidence="4">
    <location>
        <position position="447"/>
    </location>
</feature>
<feature type="modified residue" description="Omega-N-methylarginine" evidence="2">
    <location>
        <position position="492"/>
    </location>
</feature>
<feature type="modified residue" description="O-AMP-threonine; alternate" evidence="8 9 10 17 19">
    <location>
        <position position="518"/>
    </location>
</feature>
<feature type="modified residue" description="Phosphothreonine; alternate" evidence="3">
    <location>
        <position position="518"/>
    </location>
</feature>
<feature type="modified residue" description="N6,N6,N6-trimethyllysine; by METTL21A; in vitro" evidence="2">
    <location>
        <position position="585"/>
    </location>
</feature>
<feature type="modified residue" description="N6,N6-dimethyllysine; alternate" evidence="3">
    <location>
        <position position="585"/>
    </location>
</feature>
<feature type="modified residue" description="N6-methyllysine; alternate" evidence="3">
    <location>
        <position position="585"/>
    </location>
</feature>
<feature type="modified residue" description="N6-methyllysine" evidence="3">
    <location>
        <position position="591"/>
    </location>
</feature>
<feature type="modified residue" description="Phosphothreonine" evidence="4">
    <location>
        <position position="643"/>
    </location>
</feature>
<feature type="modified residue" description="Phosphothreonine" evidence="4">
    <location>
        <position position="648"/>
    </location>
</feature>
<feature type="modified residue" description="Phosphoserine" evidence="4">
    <location>
        <position position="649"/>
    </location>
</feature>
<feature type="cross-link" description="Glycyl lysine isopeptide (Lys-Gly) (interchain with G-Cter in SUMO2)" evidence="3">
    <location>
        <position position="352"/>
    </location>
</feature>
<feature type="cross-link" description="Glycyl lysine isopeptide (Lys-Gly) (interchain with G-Cter in SUMO1); alternate" evidence="3">
    <location>
        <position position="353"/>
    </location>
</feature>
<feature type="mutagenesis site" description="Impaired ATPase activity." evidence="7 10 12">
    <original>T</original>
    <variation>A</variation>
    <location>
        <position position="229"/>
    </location>
</feature>
<feature type="mutagenesis site" description="Abolished homooligomerization." evidence="7">
    <original>LVLL</original>
    <variation>ADDA</variation>
    <location>
        <begin position="414"/>
        <end position="417"/>
    </location>
</feature>
<feature type="mutagenesis site" description="Impaired substrate-binding." evidence="7 10 12">
    <original>V</original>
    <variation>F</variation>
    <location>
        <position position="461"/>
    </location>
</feature>
<feature type="mutagenesis site" description="Abolishes AMPylation." evidence="8">
    <original>T</original>
    <variation>A</variation>
    <location>
        <position position="518"/>
    </location>
</feature>
<feature type="mutagenesis site" description="Does not affect AMPylation." evidence="8">
    <original>T</original>
    <variation>A</variation>
    <location>
        <position position="525"/>
    </location>
</feature>
<feature type="mutagenesis site" description="Does not affect AMPylation." evidence="8">
    <original>T</original>
    <variation>A</variation>
    <location>
        <position position="527"/>
    </location>
</feature>
<feature type="strand" evidence="24">
    <location>
        <begin position="30"/>
        <end position="34"/>
    </location>
</feature>
<feature type="strand" evidence="24">
    <location>
        <begin position="37"/>
        <end position="46"/>
    </location>
</feature>
<feature type="strand" evidence="24">
    <location>
        <begin position="49"/>
        <end position="52"/>
    </location>
</feature>
<feature type="strand" evidence="24">
    <location>
        <begin position="60"/>
        <end position="63"/>
    </location>
</feature>
<feature type="strand" evidence="24">
    <location>
        <begin position="66"/>
        <end position="68"/>
    </location>
</feature>
<feature type="strand" evidence="25">
    <location>
        <begin position="70"/>
        <end position="72"/>
    </location>
</feature>
<feature type="strand" evidence="24">
    <location>
        <begin position="74"/>
        <end position="77"/>
    </location>
</feature>
<feature type="helix" evidence="24">
    <location>
        <begin position="78"/>
        <end position="81"/>
    </location>
</feature>
<feature type="turn" evidence="24">
    <location>
        <begin position="82"/>
        <end position="86"/>
    </location>
</feature>
<feature type="helix" evidence="23">
    <location>
        <begin position="88"/>
        <end position="90"/>
    </location>
</feature>
<feature type="helix" evidence="24">
    <location>
        <begin position="95"/>
        <end position="97"/>
    </location>
</feature>
<feature type="turn" evidence="24">
    <location>
        <begin position="98"/>
        <end position="100"/>
    </location>
</feature>
<feature type="helix" evidence="24">
    <location>
        <begin position="106"/>
        <end position="114"/>
    </location>
</feature>
<feature type="strand" evidence="24">
    <location>
        <begin position="116"/>
        <end position="122"/>
    </location>
</feature>
<feature type="strand" evidence="24">
    <location>
        <begin position="125"/>
        <end position="133"/>
    </location>
</feature>
<feature type="strand" evidence="24">
    <location>
        <begin position="136"/>
        <end position="140"/>
    </location>
</feature>
<feature type="helix" evidence="24">
    <location>
        <begin position="142"/>
        <end position="161"/>
    </location>
</feature>
<feature type="strand" evidence="24">
    <location>
        <begin position="167"/>
        <end position="172"/>
    </location>
</feature>
<feature type="helix" evidence="24">
    <location>
        <begin position="178"/>
        <end position="190"/>
    </location>
</feature>
<feature type="strand" evidence="24">
    <location>
        <begin position="194"/>
        <end position="200"/>
    </location>
</feature>
<feature type="helix" evidence="24">
    <location>
        <begin position="201"/>
        <end position="208"/>
    </location>
</feature>
<feature type="helix" evidence="24">
    <location>
        <begin position="211"/>
        <end position="213"/>
    </location>
</feature>
<feature type="strand" evidence="24">
    <location>
        <begin position="216"/>
        <end position="225"/>
    </location>
</feature>
<feature type="strand" evidence="24">
    <location>
        <begin position="230"/>
        <end position="238"/>
    </location>
</feature>
<feature type="strand" evidence="24">
    <location>
        <begin position="241"/>
        <end position="250"/>
    </location>
</feature>
<feature type="helix" evidence="24">
    <location>
        <begin position="255"/>
        <end position="274"/>
    </location>
</feature>
<feature type="helix" evidence="24">
    <location>
        <begin position="278"/>
        <end position="280"/>
    </location>
</feature>
<feature type="helix" evidence="24">
    <location>
        <begin position="282"/>
        <end position="298"/>
    </location>
</feature>
<feature type="turn" evidence="24">
    <location>
        <begin position="299"/>
        <end position="301"/>
    </location>
</feature>
<feature type="strand" evidence="24">
    <location>
        <begin position="303"/>
        <end position="309"/>
    </location>
</feature>
<feature type="strand" evidence="25">
    <location>
        <begin position="313"/>
        <end position="315"/>
    </location>
</feature>
<feature type="strand" evidence="24">
    <location>
        <begin position="318"/>
        <end position="323"/>
    </location>
</feature>
<feature type="helix" evidence="24">
    <location>
        <begin position="324"/>
        <end position="337"/>
    </location>
</feature>
<feature type="helix" evidence="24">
    <location>
        <begin position="339"/>
        <end position="348"/>
    </location>
</feature>
<feature type="helix" evidence="24">
    <location>
        <begin position="353"/>
        <end position="355"/>
    </location>
</feature>
<feature type="strand" evidence="24">
    <location>
        <begin position="358"/>
        <end position="363"/>
    </location>
</feature>
<feature type="helix" evidence="24">
    <location>
        <begin position="364"/>
        <end position="367"/>
    </location>
</feature>
<feature type="helix" evidence="24">
    <location>
        <begin position="369"/>
        <end position="378"/>
    </location>
</feature>
<feature type="turn" evidence="24">
    <location>
        <begin position="379"/>
        <end position="381"/>
    </location>
</feature>
<feature type="turn" evidence="24">
    <location>
        <begin position="390"/>
        <end position="392"/>
    </location>
</feature>
<feature type="helix" evidence="24">
    <location>
        <begin position="393"/>
        <end position="405"/>
    </location>
</feature>
<feature type="strand" evidence="23">
    <location>
        <begin position="409"/>
        <end position="411"/>
    </location>
</feature>
<feature type="strand" evidence="23">
    <location>
        <begin position="415"/>
        <end position="417"/>
    </location>
</feature>
<feature type="strand" evidence="23">
    <location>
        <begin position="424"/>
        <end position="428"/>
    </location>
</feature>
<feature type="turn" evidence="23">
    <location>
        <begin position="429"/>
        <end position="431"/>
    </location>
</feature>
<feature type="strand" evidence="23">
    <location>
        <begin position="432"/>
        <end position="437"/>
    </location>
</feature>
<feature type="strand" evidence="23">
    <location>
        <begin position="442"/>
        <end position="451"/>
    </location>
</feature>
<feature type="strand" evidence="23">
    <location>
        <begin position="461"/>
        <end position="472"/>
    </location>
</feature>
<feature type="helix" evidence="23">
    <location>
        <begin position="473"/>
        <end position="475"/>
    </location>
</feature>
<feature type="strand" evidence="23">
    <location>
        <begin position="476"/>
        <end position="485"/>
    </location>
</feature>
<feature type="strand" evidence="23">
    <location>
        <begin position="497"/>
        <end position="503"/>
    </location>
</feature>
<feature type="strand" evidence="23">
    <location>
        <begin position="509"/>
        <end position="515"/>
    </location>
</feature>
<feature type="strand" evidence="23">
    <location>
        <begin position="518"/>
        <end position="520"/>
    </location>
</feature>
<feature type="strand" evidence="23">
    <location>
        <begin position="525"/>
        <end position="530"/>
    </location>
</feature>
<feature type="helix" evidence="23">
    <location>
        <begin position="535"/>
        <end position="546"/>
    </location>
</feature>
<name>BIP_CRIGR</name>
<reference key="1">
    <citation type="journal article" date="2011" name="Nat. Biotechnol.">
        <title>The genomic sequence of the Chinese hamster ovary (CHO)-K1 cell line.</title>
        <authorList>
            <person name="Xu X."/>
            <person name="Nagarajan H."/>
            <person name="Lewis N.E."/>
            <person name="Pan S."/>
            <person name="Cai Z."/>
            <person name="Liu X."/>
            <person name="Chen W."/>
            <person name="Xie M."/>
            <person name="Wang W."/>
            <person name="Hammond S."/>
            <person name="Andersen M.R."/>
            <person name="Neff N."/>
            <person name="Passarelli B."/>
            <person name="Koh W."/>
            <person name="Fan H.C."/>
            <person name="Wang J."/>
            <person name="Gui Y."/>
            <person name="Lee K.H."/>
            <person name="Betenbaugh M.J."/>
            <person name="Quake S.R."/>
            <person name="Famili I."/>
            <person name="Palsson B.O."/>
            <person name="Wang J."/>
        </authorList>
    </citation>
    <scope>NUCLEOTIDE SEQUENCE [LARGE SCALE GENOMIC DNA]</scope>
</reference>
<reference key="2">
    <citation type="journal article" date="2015" name="Elife">
        <title>Physiological modulation of BiP activity by trans-protomer engagement of the interdomain linker.</title>
        <authorList>
            <person name="Preissler S."/>
            <person name="Chambers J.E."/>
            <person name="Crespillo-Casado A."/>
            <person name="Avezov E."/>
            <person name="Miranda E."/>
            <person name="Perez J."/>
            <person name="Hendershot L.M."/>
            <person name="Harding H.P."/>
            <person name="Ron D."/>
        </authorList>
    </citation>
    <scope>SUBUNIT</scope>
    <scope>ACTIVITY REGULATION</scope>
    <scope>DOMAIN</scope>
    <scope>MUTAGENESIS OF THR-229; 414-LEU--LEU-417 AND VAL-461</scope>
</reference>
<reference key="3">
    <citation type="journal article" date="2015" name="Elife">
        <title>AMPylation matches BiP activity to client protein load in the endoplasmic reticulum.</title>
        <authorList>
            <person name="Preissler S."/>
            <person name="Rato C."/>
            <person name="Chen R."/>
            <person name="Antrobus R."/>
            <person name="Ding S."/>
            <person name="Fearnley I.M."/>
            <person name="Ron D."/>
        </authorList>
    </citation>
    <scope>AMPYLATION AT THR-518</scope>
    <scope>MUTAGENESIS OF THR-518; THR-525 AND THR-527</scope>
</reference>
<reference key="4">
    <citation type="journal article" date="2017" name="Cell">
        <title>A J-Protein co-chaperone recruits bip to monomerize IRE1 and repress the unfolded protein response.</title>
        <authorList>
            <person name="Amin-Wetzel N."/>
            <person name="Saunders R.A."/>
            <person name="Kamphuis M.J."/>
            <person name="Rato C."/>
            <person name="Preissler S."/>
            <person name="Harding H.P."/>
            <person name="Ron D."/>
        </authorList>
    </citation>
    <scope>FUNCTION</scope>
    <scope>INTERACTION WITH ERN1</scope>
    <scope>MUTAGENESIS OF THR-229 AND VAL-461</scope>
</reference>
<reference key="5">
    <citation type="journal article" date="2017" name="Elife">
        <title>Allosteric fine-tuning of the conformational equilibrium poises the chaperone BiP for post-translational regulation.</title>
        <authorList>
            <person name="Wieteska L."/>
            <person name="Shahidi S."/>
            <person name="Zhuravleva A."/>
        </authorList>
    </citation>
    <scope>AMPYLATION AT THR-518</scope>
</reference>
<reference key="6">
    <citation type="journal article" date="2017" name="Nat. Struct. Mol. Biol.">
        <title>FICD acts bifunctionally to AMPylate and de-AMPylate the endoplasmic reticulum chaperone BiP.</title>
        <authorList>
            <person name="Preissler S."/>
            <person name="Rato C."/>
            <person name="Perera L."/>
            <person name="Saudek V."/>
            <person name="Ron D."/>
        </authorList>
    </citation>
    <scope>AMPYLATION AT THR-518</scope>
    <scope>DEAMPYLATION AT THR-518</scope>
</reference>
<reference key="7">
    <citation type="journal article" date="2017" name="Elife">
        <title>AMPylation targets the rate-limiting step of BiP's ATPase cycle for its functional inactivation.</title>
        <authorList>
            <person name="Preissler S."/>
            <person name="Rohland L."/>
            <person name="Yan Y."/>
            <person name="Chen R."/>
            <person name="Read R.J."/>
            <person name="Ron D."/>
        </authorList>
    </citation>
    <scope>X-RAY CRYSTALLOGRAPHY (1.59 ANGSTROMS) OF 28-549 IN COMPLEX WITH ADP</scope>
    <scope>ACTIVITY REGULATION</scope>
    <scope>AMPYLATION AT THR-518</scope>
    <scope>MUTAGENESIS OF THR-229 AND VAL-461</scope>
</reference>
<reference evidence="20 21 22" key="8">
    <citation type="journal article" date="2019" name="Nat. Commun.">
        <title>MANF antagonizes nucleotide exchange by the endoplasmic reticulum chaperone BiP.</title>
        <authorList>
            <person name="Yan Y."/>
            <person name="Rato C."/>
            <person name="Rohland L."/>
            <person name="Preissler S."/>
            <person name="Ron D."/>
        </authorList>
    </citation>
    <scope>X-RAY CRYSTALLOGRAPHY (1.57 ANGSTROMS) OF 28-413 IN A COMPLEX WITH MOUSE MANF</scope>
    <scope>FUNCTION</scope>
    <scope>CATALYTIC ACTIVITY</scope>
    <scope>ACTIVITY REGULATION</scope>
</reference>
<gene>
    <name evidence="3" type="primary">HSPA5</name>
    <name evidence="3" type="synonym">GRP78</name>
    <name evidence="16" type="ORF">I79_019946</name>
</gene>
<evidence type="ECO:0000250" key="1">
    <source>
        <dbReference type="UniProtKB" id="P06761"/>
    </source>
</evidence>
<evidence type="ECO:0000250" key="2">
    <source>
        <dbReference type="UniProtKB" id="P0DMV8"/>
    </source>
</evidence>
<evidence type="ECO:0000250" key="3">
    <source>
        <dbReference type="UniProtKB" id="P11021"/>
    </source>
</evidence>
<evidence type="ECO:0000250" key="4">
    <source>
        <dbReference type="UniProtKB" id="P20029"/>
    </source>
</evidence>
<evidence type="ECO:0000255" key="5"/>
<evidence type="ECO:0000256" key="6">
    <source>
        <dbReference type="SAM" id="MobiDB-lite"/>
    </source>
</evidence>
<evidence type="ECO:0000269" key="7">
    <source>
    </source>
</evidence>
<evidence type="ECO:0000269" key="8">
    <source>
    </source>
</evidence>
<evidence type="ECO:0000269" key="9">
    <source>
    </source>
</evidence>
<evidence type="ECO:0000269" key="10">
    <source>
    </source>
</evidence>
<evidence type="ECO:0000269" key="11">
    <source>
    </source>
</evidence>
<evidence type="ECO:0000269" key="12">
    <source>
    </source>
</evidence>
<evidence type="ECO:0000269" key="13">
    <source>
    </source>
</evidence>
<evidence type="ECO:0000303" key="14">
    <source>
    </source>
</evidence>
<evidence type="ECO:0000305" key="15"/>
<evidence type="ECO:0000312" key="16">
    <source>
        <dbReference type="EMBL" id="EGV94255.1"/>
    </source>
</evidence>
<evidence type="ECO:0000312" key="17">
    <source>
        <dbReference type="PDB" id="5O4P"/>
    </source>
</evidence>
<evidence type="ECO:0000312" key="18">
    <source>
        <dbReference type="PDB" id="6EOE"/>
    </source>
</evidence>
<evidence type="ECO:0000312" key="19">
    <source>
        <dbReference type="PDB" id="6EOF"/>
    </source>
</evidence>
<evidence type="ECO:0007744" key="20">
    <source>
        <dbReference type="PDB" id="6H9U"/>
    </source>
</evidence>
<evidence type="ECO:0007744" key="21">
    <source>
        <dbReference type="PDB" id="6HA7"/>
    </source>
</evidence>
<evidence type="ECO:0007744" key="22">
    <source>
        <dbReference type="PDB" id="6HAB"/>
    </source>
</evidence>
<evidence type="ECO:0007829" key="23">
    <source>
        <dbReference type="PDB" id="6EOF"/>
    </source>
</evidence>
<evidence type="ECO:0007829" key="24">
    <source>
        <dbReference type="PDB" id="6H9U"/>
    </source>
</evidence>
<evidence type="ECO:0007829" key="25">
    <source>
        <dbReference type="PDB" id="6HA7"/>
    </source>
</evidence>
<comment type="function">
    <text evidence="3 4 12 13">Endoplasmic reticulum chaperone that plays a key role in protein folding and quality control in the endoplasmic reticulum lumen (By similarity). Involved in the correct folding of proteins and degradation of misfolded proteins via its interaction with DNAJC10/ERdj5, probably to facilitate the release of DNAJC10/ERdj5 from its substrate (By similarity). Acts as a key repressor of the EIF2AK3/PERK and ERN1/IRE1-mediated unfolded protein response (UPR) (PubMed:29198525, PubMed:30710085). In the unstressed endoplasmic reticulum, recruited by DNAJB9/ERdj4 to the luminal region of ERN1/IRE1, leading to disrupt the dimerization of ERN1/IRE1, thereby inactivating ERN1/IRE1 (PubMed:29198525). Also binds and inactivates EIF2AK3/PERK in unstressed cells (By similarity). Accumulation of misfolded protein in the endoplasmic reticulum causes release of HSPA5/BiP from ERN1/IRE1 and EIF2AK3/PERK, allowing their homodimerization and subsequent activation (PubMed:29198525). Plays an auxiliary role in post-translational transport of small presecretory proteins across endoplasmic reticulum (ER). May function as an allosteric modulator for SEC61 channel-forming translocon complex, likely cooperating with SEC62 to enable the productive insertion of these precursors into SEC61 channel. Appears to specifically regulate translocation of precursors having inhibitory residues in their mature region that weaken channel gating. May also play a role in apoptosis and cell proliferation (By similarity).</text>
</comment>
<comment type="catalytic activity">
    <reaction evidence="12 13">
        <text>ATP + H2O = ADP + phosphate + H(+)</text>
        <dbReference type="Rhea" id="RHEA:13065"/>
        <dbReference type="ChEBI" id="CHEBI:15377"/>
        <dbReference type="ChEBI" id="CHEBI:15378"/>
        <dbReference type="ChEBI" id="CHEBI:30616"/>
        <dbReference type="ChEBI" id="CHEBI:43474"/>
        <dbReference type="ChEBI" id="CHEBI:456216"/>
        <dbReference type="EC" id="3.6.4.10"/>
    </reaction>
</comment>
<comment type="activity regulation">
    <text evidence="3 7 10 13">The chaperone activity is regulated by ATP-induced allosteric coupling of the nucleotide-binding (NBD) and substrate-binding (SBD) domains (By similarity). In the ADP-bound and nucleotide-free (apo) states, the two domains have little interaction (By similarity). In contrast, in the ATP-bound state the two domains are tightly coupled, which results in drastically accelerated kinetics in both binding and release of polypeptide substrates (PubMed:30710085). J domain-containing co-chaperones (DNAJB9/ERdj4 or DNAJC10/ERdj5) stimulate the ATPase activity and are required for efficient substrate recognition by HSPA5/BiP (PubMed:29064368). Homooligomerization inactivates participating HSPA5/BiP protomers and probably act as reservoirs to store HSPA5/BiP molecules when they are not needed by the cell (PubMed:26473973).</text>
</comment>
<comment type="subunit">
    <text evidence="3 4 7 12 13">Monomer and homooligomer; homooligomerization via the interdomain linker inactivates the chaperone activity and acts as a storage of HSPA5/BiP molecules (PubMed:26473973). Interacts with DNAJC1 (via J domain) (By similarity). Component of an EIF2 complex at least composed of CELF1/CUGBP1, CALR, CALR3, EIF2S1, EIF2S2, HSP90B1 and HSPA5 (By similarity). Part of a large chaperone multiprotein complex comprising DNAJB11, HSP90B1, HSPA5, HYOU, PDIA2, PDIA4, PDIA6, PPIB, SDF2L1, UGGT1 and very small amounts of ERP29, but not, or at very low levels, CALR nor CANX (By similarity). Interacts with TMEM132A and TRIM21. May form a complex with ERLEC1, OS9, SEL1L and SYVN1. Interacts with DNAJC10 (By similarity). Interacts with DNAJB9/ERdj4; leading to recruit HSPA5/BiP to ERN1/IRE1 (PubMed:29198525). Interacts with ERN1/IRE1 (via luminal domain); the interaction takes place following interaction with DNAJB9/ERdj4 and leads to inactivate ERN1/IRE1, the interaction also competitively inhibits ERN1 interaction with MANF (PubMed:29198525). Interacts directly with MANF (via SAP domain); the interaction inhibits ATP binding to HSPA5/BiP and subsequent nucleotide exchange (PubMed:30710085). Interacts with EIF2AK3/PERK (via luminal domain); interaction leads to inactivate EIF2AK3/PERK (By similarity). Interacts with MX1 (By similarity). Interacts with METTL23. Interacts with CEMIP; the interaction induces calcium leakage from the endoplasmic reticulum and cell migration. Interacts with PCSK4 form; the interaction takes place in the endoplasmic reticulum. Interacts with CIPC. Interacts with CCDC88B (via C-terminus); the interaction opposes ERN1-mediated JNK activation, protecting against apoptosis. Interacts with INPP5K; necessary for INPP5K localization at the endoplasmic reticulum. Interacts with LOXL2; leading to activate the ERN1/IRE1-XBP1 pathway of the unfolded protein response (By similarity). Interacts with CLU under stressed condition; interaction increases CLU protein stability; facilitates its retrotranslocation and redistribution to the mitochondria; cooperatively suppress stress-induced apoptosis by stabilizing mitochondrial membrane integrity (By similarity). Interacts with CCDC47 (By similarity). Interacts with CLN3 (By similarity). Interacts with ELAPOR1; may regulate the function of HSPA5 in apoptosis and cell proliferation. Interacts with CASP7 (By similarity). Interacts with ILDR2; the interaction stabilizes ILDR2 expression (By similarity). Interacts with ADAM7 (By similarity).</text>
</comment>
<comment type="interaction">
    <interactant intactId="EBI-988311">
        <id>G3I8R9</id>
    </interactant>
    <interactant intactId="EBI-6429131">
        <id>G3IL63</id>
        <label>I79_024625</label>
    </interactant>
    <organismsDiffer>false</organismsDiffer>
    <experiments>3</experiments>
</comment>
<comment type="interaction">
    <interactant intactId="EBI-988311">
        <id>G3I8R9</id>
    </interactant>
    <interactant intactId="EBI-1557743">
        <id>A0A3L7I3A5</id>
        <label>Sigmar1</label>
    </interactant>
    <organismsDiffer>false</organismsDiffer>
    <experiments>3</experiments>
</comment>
<comment type="interaction">
    <interactant intactId="EBI-988311">
        <id>G3I8R9</id>
    </interactant>
    <interactant intactId="EBI-1557700">
        <id>O55242</id>
        <label>Sigmar1</label>
    </interactant>
    <organismsDiffer>true</organismsDiffer>
    <experiments>3</experiments>
</comment>
<comment type="subcellular location">
    <subcellularLocation>
        <location evidence="3">Endoplasmic reticulum lumen</location>
    </subcellularLocation>
    <subcellularLocation>
        <location evidence="3">Melanosome</location>
    </subcellularLocation>
    <subcellularLocation>
        <location evidence="4">Cytoplasm</location>
    </subcellularLocation>
    <subcellularLocation>
        <location>Cell surface</location>
    </subcellularLocation>
    <text evidence="3">Identified by mass spectrometry in melanosome fractions from stage I to stage IV (By similarity). Localizes to the cell surface in epithelial cells; high levels of free iron promotes cell surface localization (By similarity).</text>
</comment>
<comment type="domain">
    <text evidence="7">The interdomain linker regulates the chaperone activity by mediating the formation of homooligomers. Homooligomers are formed by engagement of the interdomain linker of one HSPA5/BiP molecule as a typical substrate of an adjacent HSPA5/BiP molecule. HSPA5/BiP oligomerization inactivates participating HSPA5/BiP protomers. HSPA5/BiP oligomers probably act as reservoirs to store HSPA5/BiP molecules when they are not needed by the cell. When the levels of unfolded proteins rise, cells can rapidly break up these oligomers to make active monomers.</text>
</comment>
<comment type="PTM">
    <text evidence="8 9 11 12">In unstressed cells, AMPylation at Thr-518 by FICD inactivates the chaperome activity: AMPylated form is locked in a relatively inert state and only weakly stimulated by J domain-containing proteins (PubMed:26673894, PubMed:27918543, PubMed:29064369, PubMed:29198525). In response to endoplasmic reticulum stress, de-AMPylation by the same protein, FICD, restores the chaperone activity (PubMed:27918543).</text>
</comment>
<comment type="similarity">
    <text evidence="15">Belongs to the heat shock protein 70 family.</text>
</comment>
<protein>
    <recommendedName>
        <fullName evidence="3">Endoplasmic reticulum chaperone BiP</fullName>
        <ecNumber evidence="12 13">3.6.4.10</ecNumber>
    </recommendedName>
    <alternativeName>
        <fullName evidence="3">78 kDa glucose-regulated protein</fullName>
        <shortName evidence="3">GRP-78</shortName>
    </alternativeName>
    <alternativeName>
        <fullName evidence="14">Binding-immunoglobulin protein</fullName>
        <shortName evidence="14">BiP</shortName>
    </alternativeName>
    <alternativeName>
        <fullName evidence="3">Heat shock protein 70 family protein 5</fullName>
        <shortName evidence="3">HSP70 family protein 5</shortName>
    </alternativeName>
    <alternativeName>
        <fullName evidence="3">Heat shock protein family A member 5</fullName>
    </alternativeName>
    <alternativeName>
        <fullName evidence="14">Immunoglobulin heavy chain-binding protein</fullName>
    </alternativeName>
</protein>
<keyword id="KW-0002">3D-structure</keyword>
<keyword id="KW-0007">Acetylation</keyword>
<keyword id="KW-0067">ATP-binding</keyword>
<keyword id="KW-0143">Chaperone</keyword>
<keyword id="KW-0963">Cytoplasm</keyword>
<keyword id="KW-0256">Endoplasmic reticulum</keyword>
<keyword id="KW-0378">Hydrolase</keyword>
<keyword id="KW-1017">Isopeptide bond</keyword>
<keyword id="KW-0488">Methylation</keyword>
<keyword id="KW-0944">Nitration</keyword>
<keyword id="KW-0547">Nucleotide-binding</keyword>
<keyword id="KW-0597">Phosphoprotein</keyword>
<keyword id="KW-1185">Reference proteome</keyword>
<keyword id="KW-0732">Signal</keyword>
<keyword id="KW-0832">Ubl conjugation</keyword>
<proteinExistence type="evidence at protein level"/>
<dbReference type="EC" id="3.6.4.10" evidence="12 13"/>
<dbReference type="EMBL" id="JH001529">
    <property type="protein sequence ID" value="EGV94255.1"/>
    <property type="molecule type" value="Genomic_DNA"/>
</dbReference>
<dbReference type="RefSeq" id="NP_001233668.1">
    <property type="nucleotide sequence ID" value="NM_001246739.2"/>
</dbReference>
<dbReference type="PDB" id="5O4P">
    <property type="method" value="X-ray"/>
    <property type="resolution" value="1.86 A"/>
    <property type="chains" value="A/B=28-549"/>
</dbReference>
<dbReference type="PDB" id="6EOB">
    <property type="method" value="X-ray"/>
    <property type="resolution" value="2.00 A"/>
    <property type="chains" value="A=28-549"/>
</dbReference>
<dbReference type="PDB" id="6EOC">
    <property type="method" value="X-ray"/>
    <property type="resolution" value="1.67 A"/>
    <property type="chains" value="A=28-549"/>
</dbReference>
<dbReference type="PDB" id="6EOE">
    <property type="method" value="X-ray"/>
    <property type="resolution" value="1.71 A"/>
    <property type="chains" value="A=28-549"/>
</dbReference>
<dbReference type="PDB" id="6EOF">
    <property type="method" value="X-ray"/>
    <property type="resolution" value="1.59 A"/>
    <property type="chains" value="A=28-549"/>
</dbReference>
<dbReference type="PDB" id="6H9U">
    <property type="method" value="X-ray"/>
    <property type="resolution" value="1.57 A"/>
    <property type="chains" value="A=28-413"/>
</dbReference>
<dbReference type="PDB" id="6HA7">
    <property type="method" value="X-ray"/>
    <property type="resolution" value="2.49 A"/>
    <property type="chains" value="A/B=28-413"/>
</dbReference>
<dbReference type="PDB" id="6HAB">
    <property type="method" value="X-ray"/>
    <property type="resolution" value="2.08 A"/>
    <property type="chains" value="A=28-549"/>
</dbReference>
<dbReference type="PDB" id="6ZYH">
    <property type="method" value="X-ray"/>
    <property type="resolution" value="1.88 A"/>
    <property type="chains" value="A/B=28-406"/>
</dbReference>
<dbReference type="PDB" id="7A4U">
    <property type="method" value="X-ray"/>
    <property type="resolution" value="1.77 A"/>
    <property type="chains" value="A=28-549"/>
</dbReference>
<dbReference type="PDB" id="7A4V">
    <property type="method" value="X-ray"/>
    <property type="resolution" value="1.94 A"/>
    <property type="chains" value="A=28-549"/>
</dbReference>
<dbReference type="PDB" id="7B7Z">
    <property type="method" value="X-ray"/>
    <property type="resolution" value="1.70 A"/>
    <property type="chains" value="B=28-549"/>
</dbReference>
<dbReference type="PDB" id="7B80">
    <property type="method" value="X-ray"/>
    <property type="resolution" value="1.87 A"/>
    <property type="chains" value="B=28-549"/>
</dbReference>
<dbReference type="PDBsum" id="5O4P"/>
<dbReference type="PDBsum" id="6EOB"/>
<dbReference type="PDBsum" id="6EOC"/>
<dbReference type="PDBsum" id="6EOE"/>
<dbReference type="PDBsum" id="6EOF"/>
<dbReference type="PDBsum" id="6H9U"/>
<dbReference type="PDBsum" id="6HA7"/>
<dbReference type="PDBsum" id="6HAB"/>
<dbReference type="PDBsum" id="6ZYH"/>
<dbReference type="PDBsum" id="7A4U"/>
<dbReference type="PDBsum" id="7A4V"/>
<dbReference type="PDBsum" id="7B7Z"/>
<dbReference type="PDBsum" id="7B80"/>
<dbReference type="SMR" id="G3I8R9"/>
<dbReference type="FunCoup" id="G3I8R9">
    <property type="interactions" value="2198"/>
</dbReference>
<dbReference type="IntAct" id="G3I8R9">
    <property type="interactions" value="7"/>
</dbReference>
<dbReference type="MINT" id="G3I8R9"/>
<dbReference type="STRING" id="10029.G3I8R9"/>
<dbReference type="PaxDb" id="10029-NP_001233668.1"/>
<dbReference type="GeneID" id="100689305"/>
<dbReference type="KEGG" id="cge:100689305"/>
<dbReference type="CTD" id="3309"/>
<dbReference type="eggNOG" id="KOG0100">
    <property type="taxonomic scope" value="Eukaryota"/>
</dbReference>
<dbReference type="InParanoid" id="G3I8R9"/>
<dbReference type="OMA" id="VQRDIKH"/>
<dbReference type="OrthoDB" id="2401965at2759"/>
<dbReference type="Proteomes" id="UP000001075">
    <property type="component" value="Unassembled WGS sequence"/>
</dbReference>
<dbReference type="Proteomes" id="UP000694386">
    <property type="component" value="Unplaced"/>
</dbReference>
<dbReference type="Proteomes" id="UP001108280">
    <property type="component" value="Chromosome 6"/>
</dbReference>
<dbReference type="GO" id="GO:0009986">
    <property type="term" value="C:cell surface"/>
    <property type="evidence" value="ECO:0007669"/>
    <property type="project" value="UniProtKB-SubCell"/>
</dbReference>
<dbReference type="GO" id="GO:0005829">
    <property type="term" value="C:cytosol"/>
    <property type="evidence" value="ECO:0000250"/>
    <property type="project" value="UniProtKB"/>
</dbReference>
<dbReference type="GO" id="GO:0005788">
    <property type="term" value="C:endoplasmic reticulum lumen"/>
    <property type="evidence" value="ECO:0000314"/>
    <property type="project" value="UniProtKB"/>
</dbReference>
<dbReference type="GO" id="GO:0005789">
    <property type="term" value="C:endoplasmic reticulum membrane"/>
    <property type="evidence" value="ECO:0000314"/>
    <property type="project" value="UniProtKB"/>
</dbReference>
<dbReference type="GO" id="GO:0042470">
    <property type="term" value="C:melanosome"/>
    <property type="evidence" value="ECO:0007669"/>
    <property type="project" value="UniProtKB-SubCell"/>
</dbReference>
<dbReference type="GO" id="GO:0005739">
    <property type="term" value="C:mitochondrion"/>
    <property type="evidence" value="ECO:0000250"/>
    <property type="project" value="UniProtKB"/>
</dbReference>
<dbReference type="GO" id="GO:0048471">
    <property type="term" value="C:perinuclear region of cytoplasm"/>
    <property type="evidence" value="ECO:0000314"/>
    <property type="project" value="UniProtKB"/>
</dbReference>
<dbReference type="GO" id="GO:0005524">
    <property type="term" value="F:ATP binding"/>
    <property type="evidence" value="ECO:0000303"/>
    <property type="project" value="UniProtKB"/>
</dbReference>
<dbReference type="GO" id="GO:0016887">
    <property type="term" value="F:ATP hydrolysis activity"/>
    <property type="evidence" value="ECO:0000314"/>
    <property type="project" value="UniProtKB"/>
</dbReference>
<dbReference type="GO" id="GO:0140662">
    <property type="term" value="F:ATP-dependent protein folding chaperone"/>
    <property type="evidence" value="ECO:0007669"/>
    <property type="project" value="InterPro"/>
</dbReference>
<dbReference type="GO" id="GO:0043066">
    <property type="term" value="P:negative regulation of apoptotic process"/>
    <property type="evidence" value="ECO:0000315"/>
    <property type="project" value="UniProtKB"/>
</dbReference>
<dbReference type="GO" id="GO:1903895">
    <property type="term" value="P:negative regulation of IRE1-mediated unfolded protein response"/>
    <property type="evidence" value="ECO:0000314"/>
    <property type="project" value="UniProtKB"/>
</dbReference>
<dbReference type="GO" id="GO:0031333">
    <property type="term" value="P:negative regulation of protein-containing complex assembly"/>
    <property type="evidence" value="ECO:0000314"/>
    <property type="project" value="GO_Central"/>
</dbReference>
<dbReference type="GO" id="GO:0031204">
    <property type="term" value="P:post-translational protein targeting to membrane, translocation"/>
    <property type="evidence" value="ECO:0000250"/>
    <property type="project" value="UniProtKB"/>
</dbReference>
<dbReference type="CDD" id="cd10241">
    <property type="entry name" value="ASKHA_NBD_HSP70_BiP"/>
    <property type="match status" value="1"/>
</dbReference>
<dbReference type="FunFam" id="3.30.420.40:FF:000720">
    <property type="entry name" value="Endoplasmic reticulum chaperone BiP"/>
    <property type="match status" value="1"/>
</dbReference>
<dbReference type="FunFam" id="3.90.640.10:FF:000153">
    <property type="entry name" value="Endoplasmic reticulum chaperone BiP"/>
    <property type="match status" value="1"/>
</dbReference>
<dbReference type="FunFam" id="2.60.34.10:FF:000002">
    <property type="entry name" value="Heat shock 70 kDa"/>
    <property type="match status" value="1"/>
</dbReference>
<dbReference type="FunFam" id="3.30.30.30:FF:000001">
    <property type="entry name" value="heat shock 70 kDa protein-like"/>
    <property type="match status" value="1"/>
</dbReference>
<dbReference type="FunFam" id="1.20.1270.10:FF:000061">
    <property type="entry name" value="Heat shock protein family A (Hsp70) member 5"/>
    <property type="match status" value="1"/>
</dbReference>
<dbReference type="Gene3D" id="1.20.1270.10">
    <property type="match status" value="1"/>
</dbReference>
<dbReference type="Gene3D" id="3.30.420.40">
    <property type="match status" value="2"/>
</dbReference>
<dbReference type="Gene3D" id="3.90.640.10">
    <property type="entry name" value="Actin, Chain A, domain 4"/>
    <property type="match status" value="1"/>
</dbReference>
<dbReference type="Gene3D" id="2.60.34.10">
    <property type="entry name" value="Substrate Binding Domain Of DNAk, Chain A, domain 1"/>
    <property type="match status" value="1"/>
</dbReference>
<dbReference type="InterPro" id="IPR043129">
    <property type="entry name" value="ATPase_NBD"/>
</dbReference>
<dbReference type="InterPro" id="IPR042050">
    <property type="entry name" value="BIP_NBD"/>
</dbReference>
<dbReference type="InterPro" id="IPR018181">
    <property type="entry name" value="Heat_shock_70_CS"/>
</dbReference>
<dbReference type="InterPro" id="IPR029048">
    <property type="entry name" value="HSP70_C_sf"/>
</dbReference>
<dbReference type="InterPro" id="IPR029047">
    <property type="entry name" value="HSP70_peptide-bd_sf"/>
</dbReference>
<dbReference type="InterPro" id="IPR013126">
    <property type="entry name" value="Hsp_70_fam"/>
</dbReference>
<dbReference type="NCBIfam" id="NF001413">
    <property type="entry name" value="PRK00290.1"/>
    <property type="match status" value="1"/>
</dbReference>
<dbReference type="PANTHER" id="PTHR19375">
    <property type="entry name" value="HEAT SHOCK PROTEIN 70KDA"/>
    <property type="match status" value="1"/>
</dbReference>
<dbReference type="Pfam" id="PF00012">
    <property type="entry name" value="HSP70"/>
    <property type="match status" value="1"/>
</dbReference>
<dbReference type="PRINTS" id="PR00301">
    <property type="entry name" value="HEATSHOCK70"/>
</dbReference>
<dbReference type="SUPFAM" id="SSF53067">
    <property type="entry name" value="Actin-like ATPase domain"/>
    <property type="match status" value="2"/>
</dbReference>
<dbReference type="SUPFAM" id="SSF100934">
    <property type="entry name" value="Heat shock protein 70kD (HSP70), C-terminal subdomain"/>
    <property type="match status" value="1"/>
</dbReference>
<dbReference type="SUPFAM" id="SSF100920">
    <property type="entry name" value="Heat shock protein 70kD (HSP70), peptide-binding domain"/>
    <property type="match status" value="1"/>
</dbReference>
<dbReference type="PROSITE" id="PS00014">
    <property type="entry name" value="ER_TARGET"/>
    <property type="match status" value="1"/>
</dbReference>
<dbReference type="PROSITE" id="PS00297">
    <property type="entry name" value="HSP70_1"/>
    <property type="match status" value="1"/>
</dbReference>
<dbReference type="PROSITE" id="PS00329">
    <property type="entry name" value="HSP70_2"/>
    <property type="match status" value="1"/>
</dbReference>
<dbReference type="PROSITE" id="PS01036">
    <property type="entry name" value="HSP70_3"/>
    <property type="match status" value="1"/>
</dbReference>